<accession>Q1H012</accession>
<proteinExistence type="inferred from homology"/>
<dbReference type="EMBL" id="CP000284">
    <property type="protein sequence ID" value="ABE50175.1"/>
    <property type="molecule type" value="Genomic_DNA"/>
</dbReference>
<dbReference type="RefSeq" id="WP_011480129.1">
    <property type="nucleotide sequence ID" value="NC_007947.1"/>
</dbReference>
<dbReference type="SMR" id="Q1H012"/>
<dbReference type="STRING" id="265072.Mfla_1908"/>
<dbReference type="KEGG" id="mfa:Mfla_1908"/>
<dbReference type="eggNOG" id="COG2919">
    <property type="taxonomic scope" value="Bacteria"/>
</dbReference>
<dbReference type="HOGENOM" id="CLU_134863_5_0_4"/>
<dbReference type="OrthoDB" id="7061211at2"/>
<dbReference type="Proteomes" id="UP000002440">
    <property type="component" value="Chromosome"/>
</dbReference>
<dbReference type="GO" id="GO:0032153">
    <property type="term" value="C:cell division site"/>
    <property type="evidence" value="ECO:0007669"/>
    <property type="project" value="UniProtKB-UniRule"/>
</dbReference>
<dbReference type="GO" id="GO:0030428">
    <property type="term" value="C:cell septum"/>
    <property type="evidence" value="ECO:0007669"/>
    <property type="project" value="TreeGrafter"/>
</dbReference>
<dbReference type="GO" id="GO:0005886">
    <property type="term" value="C:plasma membrane"/>
    <property type="evidence" value="ECO:0007669"/>
    <property type="project" value="UniProtKB-SubCell"/>
</dbReference>
<dbReference type="GO" id="GO:0043093">
    <property type="term" value="P:FtsZ-dependent cytokinesis"/>
    <property type="evidence" value="ECO:0007669"/>
    <property type="project" value="UniProtKB-UniRule"/>
</dbReference>
<dbReference type="HAMAP" id="MF_00599">
    <property type="entry name" value="FtsB"/>
    <property type="match status" value="1"/>
</dbReference>
<dbReference type="InterPro" id="IPR023081">
    <property type="entry name" value="Cell_div_FtsB"/>
</dbReference>
<dbReference type="InterPro" id="IPR007060">
    <property type="entry name" value="FtsL/DivIC"/>
</dbReference>
<dbReference type="NCBIfam" id="NF002058">
    <property type="entry name" value="PRK00888.1"/>
    <property type="match status" value="1"/>
</dbReference>
<dbReference type="PANTHER" id="PTHR37485">
    <property type="entry name" value="CELL DIVISION PROTEIN FTSB"/>
    <property type="match status" value="1"/>
</dbReference>
<dbReference type="PANTHER" id="PTHR37485:SF1">
    <property type="entry name" value="CELL DIVISION PROTEIN FTSB"/>
    <property type="match status" value="1"/>
</dbReference>
<dbReference type="Pfam" id="PF04977">
    <property type="entry name" value="DivIC"/>
    <property type="match status" value="1"/>
</dbReference>
<sequence length="106" mass="11872">MRLLTLIFVALIALLQYPLWLGKGSWLRVWDLNQKIVAQKAVNAELKLRNDTLDAEVRDLKQGNAAIEERARSELGMIKQDEVFYQVIDQMPGQPASPPAALTGAQ</sequence>
<name>FTSB_METFK</name>
<gene>
    <name evidence="1" type="primary">ftsB</name>
    <name type="ordered locus">Mfla_1908</name>
</gene>
<feature type="chain" id="PRO_1000025708" description="Cell division protein FtsB">
    <location>
        <begin position="1"/>
        <end position="106"/>
    </location>
</feature>
<feature type="topological domain" description="Cytoplasmic" evidence="1">
    <location>
        <begin position="1"/>
        <end position="3"/>
    </location>
</feature>
<feature type="transmembrane region" description="Helical" evidence="1">
    <location>
        <begin position="4"/>
        <end position="21"/>
    </location>
</feature>
<feature type="topological domain" description="Periplasmic" evidence="1">
    <location>
        <begin position="22"/>
        <end position="106"/>
    </location>
</feature>
<feature type="coiled-coil region" evidence="1">
    <location>
        <begin position="31"/>
        <end position="73"/>
    </location>
</feature>
<comment type="function">
    <text evidence="1">Essential cell division protein. May link together the upstream cell division proteins, which are predominantly cytoplasmic, with the downstream cell division proteins, which are predominantly periplasmic.</text>
</comment>
<comment type="subunit">
    <text evidence="1">Part of a complex composed of FtsB, FtsL and FtsQ.</text>
</comment>
<comment type="subcellular location">
    <subcellularLocation>
        <location evidence="1">Cell inner membrane</location>
        <topology evidence="1">Single-pass type II membrane protein</topology>
    </subcellularLocation>
    <text evidence="1">Localizes to the division septum.</text>
</comment>
<comment type="similarity">
    <text evidence="1">Belongs to the FtsB family.</text>
</comment>
<evidence type="ECO:0000255" key="1">
    <source>
        <dbReference type="HAMAP-Rule" id="MF_00599"/>
    </source>
</evidence>
<organism>
    <name type="scientific">Methylobacillus flagellatus (strain ATCC 51484 / DSM 6875 / VKM B-1610 / KT)</name>
    <dbReference type="NCBI Taxonomy" id="265072"/>
    <lineage>
        <taxon>Bacteria</taxon>
        <taxon>Pseudomonadati</taxon>
        <taxon>Pseudomonadota</taxon>
        <taxon>Betaproteobacteria</taxon>
        <taxon>Nitrosomonadales</taxon>
        <taxon>Methylophilaceae</taxon>
        <taxon>Methylobacillus</taxon>
    </lineage>
</organism>
<keyword id="KW-0131">Cell cycle</keyword>
<keyword id="KW-0132">Cell division</keyword>
<keyword id="KW-0997">Cell inner membrane</keyword>
<keyword id="KW-1003">Cell membrane</keyword>
<keyword id="KW-0175">Coiled coil</keyword>
<keyword id="KW-0472">Membrane</keyword>
<keyword id="KW-1185">Reference proteome</keyword>
<keyword id="KW-0812">Transmembrane</keyword>
<keyword id="KW-1133">Transmembrane helix</keyword>
<protein>
    <recommendedName>
        <fullName evidence="1">Cell division protein FtsB</fullName>
    </recommendedName>
</protein>
<reference key="1">
    <citation type="submission" date="2006-03" db="EMBL/GenBank/DDBJ databases">
        <title>Complete sequence of Methylobacillus flagellatus KT.</title>
        <authorList>
            <consortium name="US DOE Joint Genome Institute"/>
            <person name="Copeland A."/>
            <person name="Lucas S."/>
            <person name="Lapidus A."/>
            <person name="Barry K."/>
            <person name="Detter J.C."/>
            <person name="Glavina del Rio T."/>
            <person name="Hammon N."/>
            <person name="Israni S."/>
            <person name="Dalin E."/>
            <person name="Tice H."/>
            <person name="Pitluck S."/>
            <person name="Brettin T."/>
            <person name="Bruce D."/>
            <person name="Han C."/>
            <person name="Tapia R."/>
            <person name="Saunders E."/>
            <person name="Gilna P."/>
            <person name="Schmutz J."/>
            <person name="Larimer F."/>
            <person name="Land M."/>
            <person name="Kyrpides N."/>
            <person name="Anderson I."/>
            <person name="Richardson P."/>
        </authorList>
    </citation>
    <scope>NUCLEOTIDE SEQUENCE [LARGE SCALE GENOMIC DNA]</scope>
    <source>
        <strain>ATCC 51484 / DSM 6875 / VKM B-1610 / KT</strain>
    </source>
</reference>